<sequence>MNFDMSKLMQQAQKMQEQMKKAQQERENMEVIGESGAGLVTVTMTGKYDVKSVSIDNSLMSEDKEILEDLIAAAVNSAVKKVEENSTASSNIYKMAKDAGIDLPSGINFPFK</sequence>
<protein>
    <recommendedName>
        <fullName evidence="1">Nucleoid-associated protein FTA_1499</fullName>
    </recommendedName>
</protein>
<name>Y1499_FRATF</name>
<accession>A7NDC1</accession>
<feature type="chain" id="PRO_1000071914" description="Nucleoid-associated protein FTA_1499">
    <location>
        <begin position="1"/>
        <end position="112"/>
    </location>
</feature>
<feature type="region of interest" description="Disordered" evidence="2">
    <location>
        <begin position="1"/>
        <end position="27"/>
    </location>
</feature>
<feature type="compositionally biased region" description="Basic and acidic residues" evidence="2">
    <location>
        <begin position="17"/>
        <end position="27"/>
    </location>
</feature>
<evidence type="ECO:0000255" key="1">
    <source>
        <dbReference type="HAMAP-Rule" id="MF_00274"/>
    </source>
</evidence>
<evidence type="ECO:0000256" key="2">
    <source>
        <dbReference type="SAM" id="MobiDB-lite"/>
    </source>
</evidence>
<organism>
    <name type="scientific">Francisella tularensis subsp. holarctica (strain FTNF002-00 / FTA)</name>
    <dbReference type="NCBI Taxonomy" id="458234"/>
    <lineage>
        <taxon>Bacteria</taxon>
        <taxon>Pseudomonadati</taxon>
        <taxon>Pseudomonadota</taxon>
        <taxon>Gammaproteobacteria</taxon>
        <taxon>Thiotrichales</taxon>
        <taxon>Francisellaceae</taxon>
        <taxon>Francisella</taxon>
    </lineage>
</organism>
<proteinExistence type="inferred from homology"/>
<keyword id="KW-0963">Cytoplasm</keyword>
<keyword id="KW-0238">DNA-binding</keyword>
<reference key="1">
    <citation type="journal article" date="2009" name="PLoS ONE">
        <title>Complete genome sequence of Francisella tularensis subspecies holarctica FTNF002-00.</title>
        <authorList>
            <person name="Barabote R.D."/>
            <person name="Xie G."/>
            <person name="Brettin T.S."/>
            <person name="Hinrichs S.H."/>
            <person name="Fey P.D."/>
            <person name="Jay J.J."/>
            <person name="Engle J.L."/>
            <person name="Godbole S.D."/>
            <person name="Noronha J.M."/>
            <person name="Scheuermann R.H."/>
            <person name="Zhou L.W."/>
            <person name="Lion C."/>
            <person name="Dempsey M.P."/>
        </authorList>
    </citation>
    <scope>NUCLEOTIDE SEQUENCE [LARGE SCALE GENOMIC DNA]</scope>
    <source>
        <strain>FTNF002-00 / FTA</strain>
    </source>
</reference>
<gene>
    <name type="ordered locus">FTA_1499</name>
</gene>
<dbReference type="EMBL" id="CP000803">
    <property type="protein sequence ID" value="ABU61974.1"/>
    <property type="molecule type" value="Genomic_DNA"/>
</dbReference>
<dbReference type="RefSeq" id="WP_003016682.1">
    <property type="nucleotide sequence ID" value="NC_009749.1"/>
</dbReference>
<dbReference type="SMR" id="A7NDC1"/>
<dbReference type="KEGG" id="fta:FTA_1499"/>
<dbReference type="HOGENOM" id="CLU_140930_0_0_6"/>
<dbReference type="GO" id="GO:0043590">
    <property type="term" value="C:bacterial nucleoid"/>
    <property type="evidence" value="ECO:0007669"/>
    <property type="project" value="UniProtKB-UniRule"/>
</dbReference>
<dbReference type="GO" id="GO:0005829">
    <property type="term" value="C:cytosol"/>
    <property type="evidence" value="ECO:0007669"/>
    <property type="project" value="TreeGrafter"/>
</dbReference>
<dbReference type="GO" id="GO:0003677">
    <property type="term" value="F:DNA binding"/>
    <property type="evidence" value="ECO:0007669"/>
    <property type="project" value="UniProtKB-UniRule"/>
</dbReference>
<dbReference type="Gene3D" id="3.30.1310.10">
    <property type="entry name" value="Nucleoid-associated protein YbaB-like domain"/>
    <property type="match status" value="1"/>
</dbReference>
<dbReference type="HAMAP" id="MF_00274">
    <property type="entry name" value="DNA_YbaB_EbfC"/>
    <property type="match status" value="1"/>
</dbReference>
<dbReference type="InterPro" id="IPR036894">
    <property type="entry name" value="YbaB-like_sf"/>
</dbReference>
<dbReference type="InterPro" id="IPR004401">
    <property type="entry name" value="YbaB/EbfC"/>
</dbReference>
<dbReference type="NCBIfam" id="TIGR00103">
    <property type="entry name" value="DNA_YbaB_EbfC"/>
    <property type="match status" value="1"/>
</dbReference>
<dbReference type="PANTHER" id="PTHR33449">
    <property type="entry name" value="NUCLEOID-ASSOCIATED PROTEIN YBAB"/>
    <property type="match status" value="1"/>
</dbReference>
<dbReference type="PANTHER" id="PTHR33449:SF1">
    <property type="entry name" value="NUCLEOID-ASSOCIATED PROTEIN YBAB"/>
    <property type="match status" value="1"/>
</dbReference>
<dbReference type="Pfam" id="PF02575">
    <property type="entry name" value="YbaB_DNA_bd"/>
    <property type="match status" value="1"/>
</dbReference>
<dbReference type="PIRSF" id="PIRSF004555">
    <property type="entry name" value="UCP004555"/>
    <property type="match status" value="1"/>
</dbReference>
<dbReference type="SUPFAM" id="SSF82607">
    <property type="entry name" value="YbaB-like"/>
    <property type="match status" value="1"/>
</dbReference>
<comment type="function">
    <text evidence="1">Binds to DNA and alters its conformation. May be involved in regulation of gene expression, nucleoid organization and DNA protection.</text>
</comment>
<comment type="subunit">
    <text evidence="1">Homodimer.</text>
</comment>
<comment type="subcellular location">
    <subcellularLocation>
        <location evidence="1">Cytoplasm</location>
        <location evidence="1">Nucleoid</location>
    </subcellularLocation>
</comment>
<comment type="similarity">
    <text evidence="1">Belongs to the YbaB/EbfC family.</text>
</comment>